<gene>
    <name type="ordered locus">TP_0799</name>
</gene>
<sequence length="50" mass="5796">MKTGFWQQVLPKRAGRRKEHPVQYMPHKKEENATGLMNPSLHTSHSAILK</sequence>
<reference key="1">
    <citation type="journal article" date="1998" name="Science">
        <title>Complete genome sequence of Treponema pallidum, the syphilis spirochete.</title>
        <authorList>
            <person name="Fraser C.M."/>
            <person name="Norris S.J."/>
            <person name="Weinstock G.M."/>
            <person name="White O."/>
            <person name="Sutton G.G."/>
            <person name="Dodson R.J."/>
            <person name="Gwinn M.L."/>
            <person name="Hickey E.K."/>
            <person name="Clayton R.A."/>
            <person name="Ketchum K.A."/>
            <person name="Sodergren E."/>
            <person name="Hardham J.M."/>
            <person name="McLeod M.P."/>
            <person name="Salzberg S.L."/>
            <person name="Peterson J.D."/>
            <person name="Khalak H.G."/>
            <person name="Richardson D.L."/>
            <person name="Howell J.K."/>
            <person name="Chidambaram M."/>
            <person name="Utterback T.R."/>
            <person name="McDonald L.A."/>
            <person name="Artiach P."/>
            <person name="Bowman C."/>
            <person name="Cotton M.D."/>
            <person name="Fujii C."/>
            <person name="Garland S.A."/>
            <person name="Hatch B."/>
            <person name="Horst K."/>
            <person name="Roberts K.M."/>
            <person name="Sandusky M."/>
            <person name="Weidman J.F."/>
            <person name="Smith H.O."/>
            <person name="Venter J.C."/>
        </authorList>
    </citation>
    <scope>NUCLEOTIDE SEQUENCE [LARGE SCALE GENOMIC DNA]</scope>
    <source>
        <strain>Nichols</strain>
    </source>
</reference>
<keyword id="KW-1185">Reference proteome</keyword>
<accession>O83777</accession>
<proteinExistence type="predicted"/>
<name>Y799_TREPA</name>
<organism>
    <name type="scientific">Treponema pallidum (strain Nichols)</name>
    <dbReference type="NCBI Taxonomy" id="243276"/>
    <lineage>
        <taxon>Bacteria</taxon>
        <taxon>Pseudomonadati</taxon>
        <taxon>Spirochaetota</taxon>
        <taxon>Spirochaetia</taxon>
        <taxon>Spirochaetales</taxon>
        <taxon>Treponemataceae</taxon>
        <taxon>Treponema</taxon>
    </lineage>
</organism>
<feature type="chain" id="PRO_0000202329" description="Uncharacterized protein TP_0799">
    <location>
        <begin position="1"/>
        <end position="50"/>
    </location>
</feature>
<feature type="region of interest" description="Disordered" evidence="1">
    <location>
        <begin position="1"/>
        <end position="50"/>
    </location>
</feature>
<feature type="compositionally biased region" description="Polar residues" evidence="1">
    <location>
        <begin position="35"/>
        <end position="50"/>
    </location>
</feature>
<protein>
    <recommendedName>
        <fullName>Uncharacterized protein TP_0799</fullName>
    </recommendedName>
</protein>
<dbReference type="EMBL" id="AE000520">
    <property type="protein sequence ID" value="AAC65768.1"/>
    <property type="molecule type" value="Genomic_DNA"/>
</dbReference>
<dbReference type="PIR" id="F71281">
    <property type="entry name" value="F71281"/>
</dbReference>
<dbReference type="IntAct" id="O83777">
    <property type="interactions" value="2"/>
</dbReference>
<dbReference type="STRING" id="243276.TP_0799"/>
<dbReference type="EnsemblBacteria" id="AAC65768">
    <property type="protein sequence ID" value="AAC65768"/>
    <property type="gene ID" value="TP_0799"/>
</dbReference>
<dbReference type="KEGG" id="tpa:TP_0799"/>
<dbReference type="KEGG" id="tpw:TPANIC_0799"/>
<dbReference type="HOGENOM" id="CLU_3123857_0_0_12"/>
<dbReference type="Proteomes" id="UP000000811">
    <property type="component" value="Chromosome"/>
</dbReference>
<evidence type="ECO:0000256" key="1">
    <source>
        <dbReference type="SAM" id="MobiDB-lite"/>
    </source>
</evidence>